<protein>
    <recommendedName>
        <fullName>UPF0111 protein PH1389</fullName>
    </recommendedName>
</protein>
<name>Y1389_PYRHO</name>
<proteinExistence type="inferred from homology"/>
<evidence type="ECO:0000305" key="1"/>
<comment type="similarity">
    <text evidence="1">Belongs to the UPF0111 family.</text>
</comment>
<accession>O50097</accession>
<reference key="1">
    <citation type="journal article" date="1998" name="DNA Res.">
        <title>Complete sequence and gene organization of the genome of a hyper-thermophilic archaebacterium, Pyrococcus horikoshii OT3.</title>
        <authorList>
            <person name="Kawarabayasi Y."/>
            <person name="Sawada M."/>
            <person name="Horikawa H."/>
            <person name="Haikawa Y."/>
            <person name="Hino Y."/>
            <person name="Yamamoto S."/>
            <person name="Sekine M."/>
            <person name="Baba S."/>
            <person name="Kosugi H."/>
            <person name="Hosoyama A."/>
            <person name="Nagai Y."/>
            <person name="Sakai M."/>
            <person name="Ogura K."/>
            <person name="Otsuka R."/>
            <person name="Nakazawa H."/>
            <person name="Takamiya M."/>
            <person name="Ohfuku Y."/>
            <person name="Funahashi T."/>
            <person name="Tanaka T."/>
            <person name="Kudoh Y."/>
            <person name="Yamazaki J."/>
            <person name="Kushida N."/>
            <person name="Oguchi A."/>
            <person name="Aoki K."/>
            <person name="Yoshizawa T."/>
            <person name="Nakamura Y."/>
            <person name="Robb F.T."/>
            <person name="Horikoshi K."/>
            <person name="Masuchi Y."/>
            <person name="Shizuya H."/>
            <person name="Kikuchi H."/>
        </authorList>
    </citation>
    <scope>NUCLEOTIDE SEQUENCE [LARGE SCALE GENOMIC DNA]</scope>
    <source>
        <strain>ATCC 700860 / DSM 12428 / JCM 9974 / NBRC 100139 / OT-3</strain>
    </source>
</reference>
<sequence length="212" mass="24144">MIGGKEKEVFAKIREHLNAVESTLMAFRKLFEVYIRGDVERAEELLKDVEREESRADELRRNIELMLYGGAFLPASRGDYVRLSELIDNVADAAESAAHSLMFAKPIVPKGLEDEIIRLVDESLKTFEYLKGATLALEDSVDDALMLAKKTETQEEDADKIEYDLLRKIFSREDISTYAKLIWNQVITKIGDVADRAEDASDQIMLIAIKRR</sequence>
<dbReference type="EMBL" id="BA000001">
    <property type="protein sequence ID" value="BAA30495.1"/>
    <property type="molecule type" value="Genomic_DNA"/>
</dbReference>
<dbReference type="PIR" id="G71011">
    <property type="entry name" value="G71011"/>
</dbReference>
<dbReference type="RefSeq" id="WP_010885477.1">
    <property type="nucleotide sequence ID" value="NC_000961.1"/>
</dbReference>
<dbReference type="SMR" id="O50097"/>
<dbReference type="STRING" id="70601.gene:9378365"/>
<dbReference type="EnsemblBacteria" id="BAA30495">
    <property type="protein sequence ID" value="BAA30495"/>
    <property type="gene ID" value="BAA30495"/>
</dbReference>
<dbReference type="GeneID" id="1443715"/>
<dbReference type="KEGG" id="pho:PH1389"/>
<dbReference type="eggNOG" id="arCOG02640">
    <property type="taxonomic scope" value="Archaea"/>
</dbReference>
<dbReference type="OrthoDB" id="68479at2157"/>
<dbReference type="Proteomes" id="UP000000752">
    <property type="component" value="Chromosome"/>
</dbReference>
<dbReference type="Gene3D" id="1.20.58.220">
    <property type="entry name" value="Phosphate transport system protein phou homolog 2, domain 2"/>
    <property type="match status" value="1"/>
</dbReference>
<dbReference type="InterPro" id="IPR002727">
    <property type="entry name" value="DUF47"/>
</dbReference>
<dbReference type="InterPro" id="IPR038078">
    <property type="entry name" value="PhoU-like_sf"/>
</dbReference>
<dbReference type="InterPro" id="IPR018445">
    <property type="entry name" value="Put_Phosphate_transp_reg"/>
</dbReference>
<dbReference type="NCBIfam" id="TIGR00153">
    <property type="entry name" value="TIGR00153 family protein"/>
    <property type="match status" value="1"/>
</dbReference>
<dbReference type="PANTHER" id="PTHR36536">
    <property type="entry name" value="UPF0111 PROTEIN HI_1603"/>
    <property type="match status" value="1"/>
</dbReference>
<dbReference type="PANTHER" id="PTHR36536:SF3">
    <property type="entry name" value="UPF0111 PROTEIN HI_1603"/>
    <property type="match status" value="1"/>
</dbReference>
<dbReference type="Pfam" id="PF01865">
    <property type="entry name" value="PhoU_div"/>
    <property type="match status" value="1"/>
</dbReference>
<dbReference type="SUPFAM" id="SSF109755">
    <property type="entry name" value="PhoU-like"/>
    <property type="match status" value="1"/>
</dbReference>
<gene>
    <name type="ordered locus">PH1389</name>
</gene>
<feature type="chain" id="PRO_0000154916" description="UPF0111 protein PH1389">
    <location>
        <begin position="1"/>
        <end position="212"/>
    </location>
</feature>
<organism>
    <name type="scientific">Pyrococcus horikoshii (strain ATCC 700860 / DSM 12428 / JCM 9974 / NBRC 100139 / OT-3)</name>
    <dbReference type="NCBI Taxonomy" id="70601"/>
    <lineage>
        <taxon>Archaea</taxon>
        <taxon>Methanobacteriati</taxon>
        <taxon>Methanobacteriota</taxon>
        <taxon>Thermococci</taxon>
        <taxon>Thermococcales</taxon>
        <taxon>Thermococcaceae</taxon>
        <taxon>Pyrococcus</taxon>
    </lineage>
</organism>